<name>KPTA_HYPBU</name>
<gene>
    <name evidence="1" type="primary">kptA</name>
    <name type="ordered locus">Hbut_1373</name>
</gene>
<feature type="chain" id="PRO_1000022016" description="Probable RNA 2'-phosphotransferase">
    <location>
        <begin position="1"/>
        <end position="233"/>
    </location>
</feature>
<protein>
    <recommendedName>
        <fullName evidence="1">Probable RNA 2'-phosphotransferase</fullName>
        <ecNumber evidence="1">2.7.1.-</ecNumber>
    </recommendedName>
</protein>
<organism>
    <name type="scientific">Hyperthermus butylicus (strain DSM 5456 / JCM 9403 / PLM1-5)</name>
    <dbReference type="NCBI Taxonomy" id="415426"/>
    <lineage>
        <taxon>Archaea</taxon>
        <taxon>Thermoproteota</taxon>
        <taxon>Thermoprotei</taxon>
        <taxon>Desulfurococcales</taxon>
        <taxon>Pyrodictiaceae</taxon>
        <taxon>Hyperthermus</taxon>
    </lineage>
</organism>
<reference key="1">
    <citation type="journal article" date="2007" name="Archaea">
        <title>The genome of Hyperthermus butylicus: a sulfur-reducing, peptide fermenting, neutrophilic Crenarchaeote growing up to 108 degrees C.</title>
        <authorList>
            <person name="Bruegger K."/>
            <person name="Chen L."/>
            <person name="Stark M."/>
            <person name="Zibat A."/>
            <person name="Redder P."/>
            <person name="Ruepp A."/>
            <person name="Awayez M."/>
            <person name="She Q."/>
            <person name="Garrett R.A."/>
            <person name="Klenk H.-P."/>
        </authorList>
    </citation>
    <scope>NUCLEOTIDE SEQUENCE [LARGE SCALE GENOMIC DNA]</scope>
    <source>
        <strain>DSM 5456 / JCM 9403 / PLM1-5</strain>
    </source>
</reference>
<dbReference type="EC" id="2.7.1.-" evidence="1"/>
<dbReference type="EMBL" id="CP000493">
    <property type="protein sequence ID" value="ABM81198.1"/>
    <property type="molecule type" value="Genomic_DNA"/>
</dbReference>
<dbReference type="RefSeq" id="WP_011822516.1">
    <property type="nucleotide sequence ID" value="NC_008818.1"/>
</dbReference>
<dbReference type="SMR" id="A2BMI7"/>
<dbReference type="STRING" id="415426.Hbut_1373"/>
<dbReference type="EnsemblBacteria" id="ABM81198">
    <property type="protein sequence ID" value="ABM81198"/>
    <property type="gene ID" value="Hbut_1373"/>
</dbReference>
<dbReference type="GeneID" id="4782171"/>
<dbReference type="KEGG" id="hbu:Hbut_1373"/>
<dbReference type="eggNOG" id="arCOG04063">
    <property type="taxonomic scope" value="Archaea"/>
</dbReference>
<dbReference type="HOGENOM" id="CLU_052998_4_1_2"/>
<dbReference type="OrthoDB" id="24376at2157"/>
<dbReference type="Proteomes" id="UP000002593">
    <property type="component" value="Chromosome"/>
</dbReference>
<dbReference type="GO" id="GO:0003950">
    <property type="term" value="F:NAD+ poly-ADP-ribosyltransferase activity"/>
    <property type="evidence" value="ECO:0007669"/>
    <property type="project" value="InterPro"/>
</dbReference>
<dbReference type="GO" id="GO:0000215">
    <property type="term" value="F:tRNA 2'-phosphotransferase activity"/>
    <property type="evidence" value="ECO:0007669"/>
    <property type="project" value="TreeGrafter"/>
</dbReference>
<dbReference type="GO" id="GO:0006388">
    <property type="term" value="P:tRNA splicing, via endonucleolytic cleavage and ligation"/>
    <property type="evidence" value="ECO:0007669"/>
    <property type="project" value="UniProtKB-UniRule"/>
</dbReference>
<dbReference type="Gene3D" id="3.20.170.30">
    <property type="match status" value="1"/>
</dbReference>
<dbReference type="Gene3D" id="1.10.10.970">
    <property type="entry name" value="RNA 2'-phosphotransferase, Tpt1/KptA family, N-terminal domain"/>
    <property type="match status" value="1"/>
</dbReference>
<dbReference type="HAMAP" id="MF_00299">
    <property type="entry name" value="KptA"/>
    <property type="match status" value="1"/>
</dbReference>
<dbReference type="InterPro" id="IPR002745">
    <property type="entry name" value="Ptrans_KptA/Tpt1"/>
</dbReference>
<dbReference type="InterPro" id="IPR042081">
    <property type="entry name" value="RNA_2'-PTrans_C"/>
</dbReference>
<dbReference type="InterPro" id="IPR022928">
    <property type="entry name" value="RNA_2'-PTrans_KptA"/>
</dbReference>
<dbReference type="InterPro" id="IPR042080">
    <property type="entry name" value="RNA_2'-PTrans_N"/>
</dbReference>
<dbReference type="PANTHER" id="PTHR12684">
    <property type="entry name" value="PUTATIVE PHOSPHOTRANSFERASE"/>
    <property type="match status" value="1"/>
</dbReference>
<dbReference type="PANTHER" id="PTHR12684:SF2">
    <property type="entry name" value="TRNA 2'-PHOSPHOTRANSFERASE 1"/>
    <property type="match status" value="1"/>
</dbReference>
<dbReference type="Pfam" id="PF01885">
    <property type="entry name" value="PTS_2-RNA"/>
    <property type="match status" value="1"/>
</dbReference>
<dbReference type="SUPFAM" id="SSF56399">
    <property type="entry name" value="ADP-ribosylation"/>
    <property type="match status" value="1"/>
</dbReference>
<sequence>MKPVYRCRVCSAYTEEPVHCGRPAEPLMTGEQRLRLSKLMTTLLRHLPHEAGLRLDPQGWVGIDELVRGIRERWRNRHLYQWVTRDHVIAVALLDPKGRFQLDLARGRIRAAYGHTVRVELGYRPLSMDELPDKLYHGTVAENLASILSEGLKPMRRLMVHMTTDYSSAVETGRRHGPNVVVLVIDPRCLAKHGIPVYRASDTIYLAPSVPPNCITGKIARNPQSARKTYLHA</sequence>
<keyword id="KW-0520">NAD</keyword>
<keyword id="KW-1185">Reference proteome</keyword>
<keyword id="KW-0808">Transferase</keyword>
<comment type="function">
    <text evidence="1">Removes the 2'-phosphate from RNA via an intermediate in which the phosphate is ADP-ribosylated by NAD followed by a presumed transesterification to release the RNA and generate ADP-ribose 1''-2''-cyclic phosphate (APPR&gt;P). May function as an ADP-ribosylase.</text>
</comment>
<comment type="similarity">
    <text evidence="1">Belongs to the KptA/TPT1 family.</text>
</comment>
<evidence type="ECO:0000255" key="1">
    <source>
        <dbReference type="HAMAP-Rule" id="MF_00299"/>
    </source>
</evidence>
<proteinExistence type="inferred from homology"/>
<accession>A2BMI7</accession>